<evidence type="ECO:0000255" key="1">
    <source>
        <dbReference type="HAMAP-Rule" id="MF_00081"/>
    </source>
</evidence>
<feature type="chain" id="PRO_1000118319" description="Heat-inducible transcription repressor HrcA">
    <location>
        <begin position="1"/>
        <end position="344"/>
    </location>
</feature>
<proteinExistence type="inferred from homology"/>
<organism>
    <name type="scientific">Streptococcus uberis (strain ATCC BAA-854 / 0140J)</name>
    <dbReference type="NCBI Taxonomy" id="218495"/>
    <lineage>
        <taxon>Bacteria</taxon>
        <taxon>Bacillati</taxon>
        <taxon>Bacillota</taxon>
        <taxon>Bacilli</taxon>
        <taxon>Lactobacillales</taxon>
        <taxon>Streptococcaceae</taxon>
        <taxon>Streptococcus</taxon>
    </lineage>
</organism>
<comment type="function">
    <text evidence="1">Negative regulator of class I heat shock genes (grpE-dnaK-dnaJ and groELS operons). Prevents heat-shock induction of these operons.</text>
</comment>
<comment type="similarity">
    <text evidence="1">Belongs to the HrcA family.</text>
</comment>
<reference key="1">
    <citation type="journal article" date="2009" name="BMC Genomics">
        <title>Evidence for niche adaptation in the genome of the bovine pathogen Streptococcus uberis.</title>
        <authorList>
            <person name="Ward P.N."/>
            <person name="Holden M.T.G."/>
            <person name="Leigh J.A."/>
            <person name="Lennard N."/>
            <person name="Bignell A."/>
            <person name="Barron A."/>
            <person name="Clark L."/>
            <person name="Quail M.A."/>
            <person name="Woodward J."/>
            <person name="Barrell B.G."/>
            <person name="Egan S.A."/>
            <person name="Field T.R."/>
            <person name="Maskell D."/>
            <person name="Kehoe M."/>
            <person name="Dowson C.G."/>
            <person name="Chanter N."/>
            <person name="Whatmore A.M."/>
            <person name="Bentley S.D."/>
            <person name="Parkhill J."/>
        </authorList>
    </citation>
    <scope>NUCLEOTIDE SEQUENCE [LARGE SCALE GENOMIC DNA]</scope>
    <source>
        <strain>ATCC BAA-854 / 0140J</strain>
    </source>
</reference>
<protein>
    <recommendedName>
        <fullName evidence="1">Heat-inducible transcription repressor HrcA</fullName>
    </recommendedName>
</protein>
<accession>B9DVF5</accession>
<keyword id="KW-1185">Reference proteome</keyword>
<keyword id="KW-0678">Repressor</keyword>
<keyword id="KW-0346">Stress response</keyword>
<keyword id="KW-0804">Transcription</keyword>
<keyword id="KW-0805">Transcription regulation</keyword>
<dbReference type="EMBL" id="AM946015">
    <property type="protein sequence ID" value="CAR43233.1"/>
    <property type="molecule type" value="Genomic_DNA"/>
</dbReference>
<dbReference type="RefSeq" id="WP_015911815.1">
    <property type="nucleotide sequence ID" value="NC_012004.1"/>
</dbReference>
<dbReference type="SMR" id="B9DVF5"/>
<dbReference type="STRING" id="218495.SUB1506"/>
<dbReference type="GeneID" id="93826824"/>
<dbReference type="KEGG" id="sub:SUB1506"/>
<dbReference type="eggNOG" id="COG1420">
    <property type="taxonomic scope" value="Bacteria"/>
</dbReference>
<dbReference type="HOGENOM" id="CLU_050019_1_0_9"/>
<dbReference type="OrthoDB" id="9783139at2"/>
<dbReference type="Proteomes" id="UP000000449">
    <property type="component" value="Chromosome"/>
</dbReference>
<dbReference type="GO" id="GO:0003677">
    <property type="term" value="F:DNA binding"/>
    <property type="evidence" value="ECO:0007669"/>
    <property type="project" value="InterPro"/>
</dbReference>
<dbReference type="GO" id="GO:0045892">
    <property type="term" value="P:negative regulation of DNA-templated transcription"/>
    <property type="evidence" value="ECO:0007669"/>
    <property type="project" value="UniProtKB-UniRule"/>
</dbReference>
<dbReference type="Gene3D" id="3.30.450.40">
    <property type="match status" value="1"/>
</dbReference>
<dbReference type="Gene3D" id="3.30.390.60">
    <property type="entry name" value="Heat-inducible transcription repressor hrca homolog, domain 3"/>
    <property type="match status" value="1"/>
</dbReference>
<dbReference type="Gene3D" id="1.10.10.10">
    <property type="entry name" value="Winged helix-like DNA-binding domain superfamily/Winged helix DNA-binding domain"/>
    <property type="match status" value="1"/>
</dbReference>
<dbReference type="HAMAP" id="MF_00081">
    <property type="entry name" value="HrcA"/>
    <property type="match status" value="1"/>
</dbReference>
<dbReference type="InterPro" id="IPR029016">
    <property type="entry name" value="GAF-like_dom_sf"/>
</dbReference>
<dbReference type="InterPro" id="IPR002571">
    <property type="entry name" value="HrcA"/>
</dbReference>
<dbReference type="InterPro" id="IPR021153">
    <property type="entry name" value="HrcA_C"/>
</dbReference>
<dbReference type="InterPro" id="IPR036388">
    <property type="entry name" value="WH-like_DNA-bd_sf"/>
</dbReference>
<dbReference type="InterPro" id="IPR036390">
    <property type="entry name" value="WH_DNA-bd_sf"/>
</dbReference>
<dbReference type="InterPro" id="IPR005104">
    <property type="entry name" value="WHTH_HrcA_DNA-bd"/>
</dbReference>
<dbReference type="InterPro" id="IPR023120">
    <property type="entry name" value="WHTH_transcript_rep_HrcA_IDD"/>
</dbReference>
<dbReference type="NCBIfam" id="TIGR00331">
    <property type="entry name" value="hrcA"/>
    <property type="match status" value="1"/>
</dbReference>
<dbReference type="PANTHER" id="PTHR34824">
    <property type="entry name" value="HEAT-INDUCIBLE TRANSCRIPTION REPRESSOR HRCA"/>
    <property type="match status" value="1"/>
</dbReference>
<dbReference type="PANTHER" id="PTHR34824:SF1">
    <property type="entry name" value="HEAT-INDUCIBLE TRANSCRIPTION REPRESSOR HRCA"/>
    <property type="match status" value="1"/>
</dbReference>
<dbReference type="Pfam" id="PF01628">
    <property type="entry name" value="HrcA"/>
    <property type="match status" value="1"/>
</dbReference>
<dbReference type="Pfam" id="PF03444">
    <property type="entry name" value="HrcA_DNA-bdg"/>
    <property type="match status" value="1"/>
</dbReference>
<dbReference type="PIRSF" id="PIRSF005485">
    <property type="entry name" value="HrcA"/>
    <property type="match status" value="1"/>
</dbReference>
<dbReference type="SUPFAM" id="SSF55781">
    <property type="entry name" value="GAF domain-like"/>
    <property type="match status" value="1"/>
</dbReference>
<dbReference type="SUPFAM" id="SSF46785">
    <property type="entry name" value="Winged helix' DNA-binding domain"/>
    <property type="match status" value="1"/>
</dbReference>
<gene>
    <name evidence="1" type="primary">hrcA</name>
    <name type="ordered locus">SUB1506</name>
</gene>
<name>HRCA_STRU0</name>
<sequence length="344" mass="39342">MITERQNEILNLIIDLFTQTHEPVGSKALQASIETSSATIRNEMAKLEKLGLLEKAHTSSGRMPSPAGFKYFVEHSLSLDSVDESDIYQLVKAFDFEAFRLEDILAKASQVLADMTHYSVAILDVEPSHQKLTAFDIVQLSNHDALAVLNLDESKPQTVQFAIPKNFLTRDLVKIKEIVDERLLGRNLMDVHYKLRTEIPQILQKYFTVTDNVLDLFEYIFRELFQESIFVSGKVNALEYAGLDTYQFLNNEQHLAFTIRQGMSENEMATVQVADSNEPALANLSLLTYKFLIPYRGFGLLSLIGPIDMNYRRNVSLINVMGRILAIKLRDYYRYLNSNHYEVN</sequence>